<dbReference type="EMBL" id="CP000934">
    <property type="protein sequence ID" value="ACE83006.1"/>
    <property type="molecule type" value="Genomic_DNA"/>
</dbReference>
<dbReference type="RefSeq" id="WP_012487587.1">
    <property type="nucleotide sequence ID" value="NC_010995.1"/>
</dbReference>
<dbReference type="STRING" id="498211.CJA_1978"/>
<dbReference type="KEGG" id="cja:CJA_1978"/>
<dbReference type="eggNOG" id="COG1671">
    <property type="taxonomic scope" value="Bacteria"/>
</dbReference>
<dbReference type="HOGENOM" id="CLU_106619_2_1_6"/>
<dbReference type="OrthoDB" id="9798918at2"/>
<dbReference type="Proteomes" id="UP000001036">
    <property type="component" value="Chromosome"/>
</dbReference>
<dbReference type="CDD" id="cd18720">
    <property type="entry name" value="PIN_YqxD-like"/>
    <property type="match status" value="1"/>
</dbReference>
<dbReference type="HAMAP" id="MF_00489">
    <property type="entry name" value="UPF0178"/>
    <property type="match status" value="1"/>
</dbReference>
<dbReference type="InterPro" id="IPR003791">
    <property type="entry name" value="UPF0178"/>
</dbReference>
<dbReference type="NCBIfam" id="NF001095">
    <property type="entry name" value="PRK00124.1"/>
    <property type="match status" value="1"/>
</dbReference>
<dbReference type="PANTHER" id="PTHR35146">
    <property type="entry name" value="UPF0178 PROTEIN YAII"/>
    <property type="match status" value="1"/>
</dbReference>
<dbReference type="PANTHER" id="PTHR35146:SF1">
    <property type="entry name" value="UPF0178 PROTEIN YAII"/>
    <property type="match status" value="1"/>
</dbReference>
<dbReference type="Pfam" id="PF02639">
    <property type="entry name" value="DUF188"/>
    <property type="match status" value="1"/>
</dbReference>
<reference key="1">
    <citation type="journal article" date="2008" name="J. Bacteriol.">
        <title>Insights into plant cell wall degradation from the genome sequence of the soil bacterium Cellvibrio japonicus.</title>
        <authorList>
            <person name="DeBoy R.T."/>
            <person name="Mongodin E.F."/>
            <person name="Fouts D.E."/>
            <person name="Tailford L.E."/>
            <person name="Khouri H."/>
            <person name="Emerson J.B."/>
            <person name="Mohamoud Y."/>
            <person name="Watkins K."/>
            <person name="Henrissat B."/>
            <person name="Gilbert H.J."/>
            <person name="Nelson K.E."/>
        </authorList>
    </citation>
    <scope>NUCLEOTIDE SEQUENCE [LARGE SCALE GENOMIC DNA]</scope>
    <source>
        <strain>Ueda107</strain>
    </source>
</reference>
<organism>
    <name type="scientific">Cellvibrio japonicus (strain Ueda107)</name>
    <name type="common">Pseudomonas fluorescens subsp. cellulosa</name>
    <dbReference type="NCBI Taxonomy" id="498211"/>
    <lineage>
        <taxon>Bacteria</taxon>
        <taxon>Pseudomonadati</taxon>
        <taxon>Pseudomonadota</taxon>
        <taxon>Gammaproteobacteria</taxon>
        <taxon>Cellvibrionales</taxon>
        <taxon>Cellvibrionaceae</taxon>
        <taxon>Cellvibrio</taxon>
    </lineage>
</organism>
<gene>
    <name type="ordered locus">CJA_1978</name>
</gene>
<comment type="similarity">
    <text evidence="1">Belongs to the UPF0178 family.</text>
</comment>
<sequence length="151" mass="16515">MPIWVDADACPKPVKEILFRAAHQRQILLTLVANQYIAVPASPFIKSLQVSSGFDVADNHIVASLVAGDLVITADIPLAADAIAKGAAVINPRGQEYTKDSIGARLNMRDFMETMRSSGVVMQDGPPPFSQQDRQSFANALDRWIARQRKI</sequence>
<protein>
    <recommendedName>
        <fullName evidence="1">UPF0178 protein CJA_1978</fullName>
    </recommendedName>
</protein>
<proteinExistence type="inferred from homology"/>
<name>Y1978_CELJU</name>
<accession>B3PHH8</accession>
<feature type="chain" id="PRO_1000126183" description="UPF0178 protein CJA_1978">
    <location>
        <begin position="1"/>
        <end position="151"/>
    </location>
</feature>
<evidence type="ECO:0000255" key="1">
    <source>
        <dbReference type="HAMAP-Rule" id="MF_00489"/>
    </source>
</evidence>
<keyword id="KW-1185">Reference proteome</keyword>